<accession>Q923S6</accession>
<accession>Q91ZT6</accession>
<accession>Q9CWF1</accession>
<accession>Q9QWF1</accession>
<gene>
    <name type="primary">Neurl1</name>
    <name type="synonym">Neurl</name>
    <name type="synonym">Neurl1a</name>
</gene>
<evidence type="ECO:0000250" key="1"/>
<evidence type="ECO:0000255" key="2">
    <source>
        <dbReference type="PROSITE-ProRule" id="PRU00175"/>
    </source>
</evidence>
<evidence type="ECO:0000255" key="3">
    <source>
        <dbReference type="PROSITE-ProRule" id="PRU00400"/>
    </source>
</evidence>
<evidence type="ECO:0000256" key="4">
    <source>
        <dbReference type="SAM" id="MobiDB-lite"/>
    </source>
</evidence>
<evidence type="ECO:0000269" key="5">
    <source>
    </source>
</evidence>
<evidence type="ECO:0000269" key="6">
    <source>
    </source>
</evidence>
<evidence type="ECO:0000269" key="7">
    <source>
    </source>
</evidence>
<evidence type="ECO:0000269" key="8">
    <source>
    </source>
</evidence>
<evidence type="ECO:0000269" key="9">
    <source>
    </source>
</evidence>
<evidence type="ECO:0000303" key="10">
    <source>
    </source>
</evidence>
<evidence type="ECO:0000303" key="11">
    <source>
    </source>
</evidence>
<evidence type="ECO:0000305" key="12"/>
<feature type="initiator methionine" description="Removed">
    <location>
        <position position="1"/>
    </location>
</feature>
<feature type="chain" id="PRO_0000181256" description="E3 ubiquitin-protein ligase NEURL1">
    <location>
        <begin position="2"/>
        <end position="574"/>
    </location>
</feature>
<feature type="domain" description="NHR 1" evidence="3">
    <location>
        <begin position="61"/>
        <end position="217"/>
    </location>
</feature>
<feature type="domain" description="NHR 2" evidence="3">
    <location>
        <begin position="292"/>
        <end position="447"/>
    </location>
</feature>
<feature type="zinc finger region" description="RING-type" evidence="2">
    <location>
        <begin position="520"/>
        <end position="560"/>
    </location>
</feature>
<feature type="region of interest" description="Disordered" evidence="4">
    <location>
        <begin position="1"/>
        <end position="53"/>
    </location>
</feature>
<feature type="compositionally biased region" description="Polar residues" evidence="4">
    <location>
        <begin position="1"/>
        <end position="18"/>
    </location>
</feature>
<feature type="lipid moiety-binding region" description="N-myristoyl glycine" evidence="7">
    <location>
        <position position="2"/>
    </location>
</feature>
<feature type="splice variant" id="VSP_013152" description="In isoform 2." evidence="10">
    <original>MGNNFSSVSSLQRGNPSRASRGHPQNLK</original>
    <variation>MGGQITRNTIH</variation>
    <location>
        <begin position="1"/>
        <end position="28"/>
    </location>
</feature>
<feature type="splice variant" id="VSP_013153" description="In isoform 3." evidence="11">
    <original>DS</original>
    <variation>GM</variation>
    <location>
        <begin position="217"/>
        <end position="218"/>
    </location>
</feature>
<feature type="splice variant" id="VSP_013154" description="In isoform 3." evidence="11">
    <location>
        <begin position="219"/>
        <end position="574"/>
    </location>
</feature>
<feature type="sequence conflict" description="In Ref. 3 and 4." evidence="12" ref="3 4">
    <original>VDP</original>
    <variation>ADR</variation>
    <location>
        <begin position="197"/>
        <end position="199"/>
    </location>
</feature>
<feature type="sequence conflict" description="In Ref. 3 and 4." evidence="12" ref="3 4">
    <original>AG</original>
    <variation>RR</variation>
    <location>
        <begin position="301"/>
        <end position="302"/>
    </location>
</feature>
<feature type="sequence conflict" description="In Ref. 3 and 4." evidence="12" ref="3 4">
    <original>L</original>
    <variation>V</variation>
    <location>
        <position position="316"/>
    </location>
</feature>
<feature type="sequence conflict" description="In Ref. 3 and 4." evidence="12" ref="3 4">
    <original>V</original>
    <variation>L</variation>
    <location>
        <position position="332"/>
    </location>
</feature>
<feature type="sequence conflict" description="In Ref. 1; AAK97495." evidence="12" ref="1">
    <original>R</original>
    <variation>S</variation>
    <location>
        <position position="333"/>
    </location>
</feature>
<feature type="sequence conflict" description="In Ref. 3 and 4." evidence="12" ref="3 4">
    <original>GRA</original>
    <variation>ARP</variation>
    <location>
        <begin position="348"/>
        <end position="350"/>
    </location>
</feature>
<keyword id="KW-0025">Alternative splicing</keyword>
<keyword id="KW-1003">Cell membrane</keyword>
<keyword id="KW-0966">Cell projection</keyword>
<keyword id="KW-0963">Cytoplasm</keyword>
<keyword id="KW-0449">Lipoprotein</keyword>
<keyword id="KW-0472">Membrane</keyword>
<keyword id="KW-0479">Metal-binding</keyword>
<keyword id="KW-0519">Myristate</keyword>
<keyword id="KW-0914">Notch signaling pathway</keyword>
<keyword id="KW-1185">Reference proteome</keyword>
<keyword id="KW-0677">Repeat</keyword>
<keyword id="KW-0770">Synapse</keyword>
<keyword id="KW-0808">Transferase</keyword>
<keyword id="KW-0810">Translation regulation</keyword>
<keyword id="KW-0043">Tumor suppressor</keyword>
<keyword id="KW-0833">Ubl conjugation pathway</keyword>
<keyword id="KW-0862">Zinc</keyword>
<keyword id="KW-0863">Zinc-finger</keyword>
<protein>
    <recommendedName>
        <fullName>E3 ubiquitin-protein ligase NEURL1</fullName>
        <ecNumber>2.3.2.27</ecNumber>
    </recommendedName>
    <alternativeName>
        <fullName>Neuralized-like protein 1A</fullName>
        <shortName>m-neu1</shortName>
        <shortName>m-neuralized 1</shortName>
    </alternativeName>
    <alternativeName>
        <fullName>Neuralized1</fullName>
    </alternativeName>
    <alternativeName>
        <fullName evidence="12">RING-type E3 ubiquitin transferase NEURL1</fullName>
    </alternativeName>
</protein>
<reference key="1">
    <citation type="journal article" date="2001" name="Mol. Cell. Biol.">
        <title>Isolation of a murine homologue of the Drosophila neuralized gene, a gene required for axonemal integrity in spermatozoa and terminal maturation of the mammary gland.</title>
        <authorList>
            <person name="Vollrath B."/>
            <person name="Pudney J."/>
            <person name="Asa S."/>
            <person name="Leder P."/>
            <person name="Fitzgerald K."/>
        </authorList>
    </citation>
    <scope>NUCLEOTIDE SEQUENCE [MRNA] (ISOFORM 2)</scope>
    <scope>DEVELOPMENTAL STAGE</scope>
    <scope>TISSUE SPECIFICITY</scope>
    <scope>DISRUPTION PHENOTYPE</scope>
    <source>
        <tissue>Brain</tissue>
        <tissue>Skeletal muscle</tissue>
    </source>
</reference>
<reference key="2">
    <citation type="journal article" date="2001" name="Proc. Natl. Acad. Sci. U.S.A.">
        <title>Ethanol hypersensitivity and olfactory discrimination defect in mice lacking a homolog of Drosophila neuralized.</title>
        <authorList>
            <person name="Ruan Y."/>
            <person name="Tecott L."/>
            <person name="Jiang M.-M."/>
            <person name="Jan L.Y."/>
            <person name="Jan Y.N."/>
        </authorList>
    </citation>
    <scope>NUCLEOTIDE SEQUENCE [MRNA] (ISOFORM 1)</scope>
    <scope>DEVELOPMENTAL STAGE</scope>
    <scope>TISSUE SPECIFICITY</scope>
    <scope>DISRUPTION PHENOTYPE</scope>
    <source>
        <strain>C57BL/6J</strain>
        <tissue>Embryo</tissue>
    </source>
</reference>
<reference key="3">
    <citation type="submission" date="2000-01" db="EMBL/GenBank/DDBJ databases">
        <authorList>
            <person name="Pavlopoulos E."/>
            <person name="Prinos P."/>
            <person name="Kilpatrick M."/>
            <person name="Tsipouras P."/>
            <person name="Maschonas N.K."/>
        </authorList>
    </citation>
    <scope>NUCLEOTIDE SEQUENCE [MRNA] (ISOFORM 1)</scope>
    <source>
        <tissue>Embryonic brain</tissue>
    </source>
</reference>
<reference key="4">
    <citation type="submission" date="2000-02" db="EMBL/GenBank/DDBJ databases">
        <title>Genomic organization of the murine neurl gene.</title>
        <authorList>
            <person name="Kokkinaki M."/>
            <person name="Moschonas N.K."/>
        </authorList>
    </citation>
    <scope>NUCLEOTIDE SEQUENCE [GENOMIC DNA]</scope>
    <source>
        <strain>129/SvJ</strain>
        <tissue>Brain</tissue>
    </source>
</reference>
<reference key="5">
    <citation type="journal article" date="2005" name="Science">
        <title>The transcriptional landscape of the mammalian genome.</title>
        <authorList>
            <person name="Carninci P."/>
            <person name="Kasukawa T."/>
            <person name="Katayama S."/>
            <person name="Gough J."/>
            <person name="Frith M.C."/>
            <person name="Maeda N."/>
            <person name="Oyama R."/>
            <person name="Ravasi T."/>
            <person name="Lenhard B."/>
            <person name="Wells C."/>
            <person name="Kodzius R."/>
            <person name="Shimokawa K."/>
            <person name="Bajic V.B."/>
            <person name="Brenner S.E."/>
            <person name="Batalov S."/>
            <person name="Forrest A.R."/>
            <person name="Zavolan M."/>
            <person name="Davis M.J."/>
            <person name="Wilming L.G."/>
            <person name="Aidinis V."/>
            <person name="Allen J.E."/>
            <person name="Ambesi-Impiombato A."/>
            <person name="Apweiler R."/>
            <person name="Aturaliya R.N."/>
            <person name="Bailey T.L."/>
            <person name="Bansal M."/>
            <person name="Baxter L."/>
            <person name="Beisel K.W."/>
            <person name="Bersano T."/>
            <person name="Bono H."/>
            <person name="Chalk A.M."/>
            <person name="Chiu K.P."/>
            <person name="Choudhary V."/>
            <person name="Christoffels A."/>
            <person name="Clutterbuck D.R."/>
            <person name="Crowe M.L."/>
            <person name="Dalla E."/>
            <person name="Dalrymple B.P."/>
            <person name="de Bono B."/>
            <person name="Della Gatta G."/>
            <person name="di Bernardo D."/>
            <person name="Down T."/>
            <person name="Engstrom P."/>
            <person name="Fagiolini M."/>
            <person name="Faulkner G."/>
            <person name="Fletcher C.F."/>
            <person name="Fukushima T."/>
            <person name="Furuno M."/>
            <person name="Futaki S."/>
            <person name="Gariboldi M."/>
            <person name="Georgii-Hemming P."/>
            <person name="Gingeras T.R."/>
            <person name="Gojobori T."/>
            <person name="Green R.E."/>
            <person name="Gustincich S."/>
            <person name="Harbers M."/>
            <person name="Hayashi Y."/>
            <person name="Hensch T.K."/>
            <person name="Hirokawa N."/>
            <person name="Hill D."/>
            <person name="Huminiecki L."/>
            <person name="Iacono M."/>
            <person name="Ikeo K."/>
            <person name="Iwama A."/>
            <person name="Ishikawa T."/>
            <person name="Jakt M."/>
            <person name="Kanapin A."/>
            <person name="Katoh M."/>
            <person name="Kawasawa Y."/>
            <person name="Kelso J."/>
            <person name="Kitamura H."/>
            <person name="Kitano H."/>
            <person name="Kollias G."/>
            <person name="Krishnan S.P."/>
            <person name="Kruger A."/>
            <person name="Kummerfeld S.K."/>
            <person name="Kurochkin I.V."/>
            <person name="Lareau L.F."/>
            <person name="Lazarevic D."/>
            <person name="Lipovich L."/>
            <person name="Liu J."/>
            <person name="Liuni S."/>
            <person name="McWilliam S."/>
            <person name="Madan Babu M."/>
            <person name="Madera M."/>
            <person name="Marchionni L."/>
            <person name="Matsuda H."/>
            <person name="Matsuzawa S."/>
            <person name="Miki H."/>
            <person name="Mignone F."/>
            <person name="Miyake S."/>
            <person name="Morris K."/>
            <person name="Mottagui-Tabar S."/>
            <person name="Mulder N."/>
            <person name="Nakano N."/>
            <person name="Nakauchi H."/>
            <person name="Ng P."/>
            <person name="Nilsson R."/>
            <person name="Nishiguchi S."/>
            <person name="Nishikawa S."/>
            <person name="Nori F."/>
            <person name="Ohara O."/>
            <person name="Okazaki Y."/>
            <person name="Orlando V."/>
            <person name="Pang K.C."/>
            <person name="Pavan W.J."/>
            <person name="Pavesi G."/>
            <person name="Pesole G."/>
            <person name="Petrovsky N."/>
            <person name="Piazza S."/>
            <person name="Reed J."/>
            <person name="Reid J.F."/>
            <person name="Ring B.Z."/>
            <person name="Ringwald M."/>
            <person name="Rost B."/>
            <person name="Ruan Y."/>
            <person name="Salzberg S.L."/>
            <person name="Sandelin A."/>
            <person name="Schneider C."/>
            <person name="Schoenbach C."/>
            <person name="Sekiguchi K."/>
            <person name="Semple C.A."/>
            <person name="Seno S."/>
            <person name="Sessa L."/>
            <person name="Sheng Y."/>
            <person name="Shibata Y."/>
            <person name="Shimada H."/>
            <person name="Shimada K."/>
            <person name="Silva D."/>
            <person name="Sinclair B."/>
            <person name="Sperling S."/>
            <person name="Stupka E."/>
            <person name="Sugiura K."/>
            <person name="Sultana R."/>
            <person name="Takenaka Y."/>
            <person name="Taki K."/>
            <person name="Tammoja K."/>
            <person name="Tan S.L."/>
            <person name="Tang S."/>
            <person name="Taylor M.S."/>
            <person name="Tegner J."/>
            <person name="Teichmann S.A."/>
            <person name="Ueda H.R."/>
            <person name="van Nimwegen E."/>
            <person name="Verardo R."/>
            <person name="Wei C.L."/>
            <person name="Yagi K."/>
            <person name="Yamanishi H."/>
            <person name="Zabarovsky E."/>
            <person name="Zhu S."/>
            <person name="Zimmer A."/>
            <person name="Hide W."/>
            <person name="Bult C."/>
            <person name="Grimmond S.M."/>
            <person name="Teasdale R.D."/>
            <person name="Liu E.T."/>
            <person name="Brusic V."/>
            <person name="Quackenbush J."/>
            <person name="Wahlestedt C."/>
            <person name="Mattick J.S."/>
            <person name="Hume D.A."/>
            <person name="Kai C."/>
            <person name="Sasaki D."/>
            <person name="Tomaru Y."/>
            <person name="Fukuda S."/>
            <person name="Kanamori-Katayama M."/>
            <person name="Suzuki M."/>
            <person name="Aoki J."/>
            <person name="Arakawa T."/>
            <person name="Iida J."/>
            <person name="Imamura K."/>
            <person name="Itoh M."/>
            <person name="Kato T."/>
            <person name="Kawaji H."/>
            <person name="Kawagashira N."/>
            <person name="Kawashima T."/>
            <person name="Kojima M."/>
            <person name="Kondo S."/>
            <person name="Konno H."/>
            <person name="Nakano K."/>
            <person name="Ninomiya N."/>
            <person name="Nishio T."/>
            <person name="Okada M."/>
            <person name="Plessy C."/>
            <person name="Shibata K."/>
            <person name="Shiraki T."/>
            <person name="Suzuki S."/>
            <person name="Tagami M."/>
            <person name="Waki K."/>
            <person name="Watahiki A."/>
            <person name="Okamura-Oho Y."/>
            <person name="Suzuki H."/>
            <person name="Kawai J."/>
            <person name="Hayashizaki Y."/>
        </authorList>
    </citation>
    <scope>NUCLEOTIDE SEQUENCE [LARGE SCALE MRNA] (ISOFORM 3)</scope>
    <source>
        <strain>C57BL/6J</strain>
    </source>
</reference>
<reference key="6">
    <citation type="journal article" date="2004" name="Genome Res.">
        <title>The status, quality, and expansion of the NIH full-length cDNA project: the Mammalian Gene Collection (MGC).</title>
        <authorList>
            <consortium name="The MGC Project Team"/>
        </authorList>
    </citation>
    <scope>NUCLEOTIDE SEQUENCE [LARGE SCALE MRNA] (ISOFORM 1)</scope>
    <source>
        <strain>C57BL/6J</strain>
        <tissue>Brain</tissue>
    </source>
</reference>
<reference key="7">
    <citation type="journal article" date="2008" name="J. Biol. Chem.">
        <title>Neuralized-like 1 (Neurl1) targeted to the plasma membrane by N-myristoylation regulates the Notch ligand Jagged1.</title>
        <authorList>
            <person name="Koutelou E."/>
            <person name="Sato S."/>
            <person name="Tomomori-Sato C."/>
            <person name="Florens L."/>
            <person name="Swanson S.K."/>
            <person name="Washburn M.P."/>
            <person name="Kokkinaki M."/>
            <person name="Conaway R.C."/>
            <person name="Conaway J.W."/>
            <person name="Moschonas N.K."/>
        </authorList>
    </citation>
    <scope>FUNCTION</scope>
    <scope>MYRISTOYLATION AT GLY-2</scope>
</reference>
<reference key="8">
    <citation type="journal article" date="2009" name="Biochem. Biophys. Res. Commun.">
        <title>Neuralized-2: Expression in human and rodents and interaction with Delta-like ligands.</title>
        <authorList>
            <person name="Rullinkov G."/>
            <person name="Tamme R."/>
            <person name="Sarapuu A."/>
            <person name="Lauren J."/>
            <person name="Sepp M."/>
            <person name="Palm K."/>
            <person name="Timmusk T."/>
        </authorList>
    </citation>
    <scope>INTERACTION WITH DLL1</scope>
</reference>
<reference key="9">
    <citation type="journal article" date="2011" name="Cell">
        <title>Neuralized1 activates CPEB3: a function for nonproteolytic ubiquitin in synaptic plasticity and memory storage.</title>
        <authorList>
            <person name="Pavlopoulos E."/>
            <person name="Trifilieff P."/>
            <person name="Chevaleyre V."/>
            <person name="Fioriti L."/>
            <person name="Zairis S."/>
            <person name="Pagano A."/>
            <person name="Malleret G."/>
            <person name="Kandel E.R."/>
        </authorList>
    </citation>
    <scope>FUNCTION</scope>
    <scope>INTERACTION WITH CPEB3</scope>
    <scope>SUBCELLULAR LOCATION</scope>
    <scope>INDUCTION</scope>
    <scope>TISSUE SPECIFICITY</scope>
</reference>
<organism>
    <name type="scientific">Mus musculus</name>
    <name type="common">Mouse</name>
    <dbReference type="NCBI Taxonomy" id="10090"/>
    <lineage>
        <taxon>Eukaryota</taxon>
        <taxon>Metazoa</taxon>
        <taxon>Chordata</taxon>
        <taxon>Craniata</taxon>
        <taxon>Vertebrata</taxon>
        <taxon>Euteleostomi</taxon>
        <taxon>Mammalia</taxon>
        <taxon>Eutheria</taxon>
        <taxon>Euarchontoglires</taxon>
        <taxon>Glires</taxon>
        <taxon>Rodentia</taxon>
        <taxon>Myomorpha</taxon>
        <taxon>Muroidea</taxon>
        <taxon>Muridae</taxon>
        <taxon>Murinae</taxon>
        <taxon>Mus</taxon>
        <taxon>Mus</taxon>
    </lineage>
</organism>
<name>NEUL1_MOUSE</name>
<sequence length="574" mass="61778">MGNNFSSVSSLQRGNPSRASRGHPQNLKDSIGGSFPVPSHRCHHKQKHCPPTLSGGGLPATPLLFHPHTKGSQILMDLSHKAVKRQASFCNAITFSNRPVLIYEQVRLKITKKQCCWSGALRLGFTSKDPSRIHPDSLPKYACPDLVSQSGFWAKALPEEFANEGNIIAFWVDKKGRVFYRINESAAMLFFSGVRTVDPLWALVDVYGLTRGVQLLDSELVLPDCLRPRSFTALRRPSLRCEADEARLSVSLCDLNVPGADGDDGAPPAGCPIPQNSLNSQHSRALPAQLDGDLRFHALRAGAHVRILDEQTVARLEHGRDERALVFTSRPVRVAETIFIKVTRSGGGRAGALSFGVTTCDPGTLRPADLPFSPEALVDRKEFWAVCRVPGPLHSGDILGLVVNADGELHLSHNGAAAGMQLCVDASQPLWMLFSLHGAITQVRILGSTIMTERGGPSLPCSPASTPTSPSALGIRLSDPLLSTCGSGPLGGSAGGTAPNSPVSLPESPVTPGLGQWSDECTICYEHAVDTVIYTCGHMCLCYSCGLRLKKALHACCPICRRPIKDIIKTYRSS</sequence>
<dbReference type="EC" id="2.3.2.27"/>
<dbReference type="EMBL" id="AF401228">
    <property type="protein sequence ID" value="AAK97495.1"/>
    <property type="molecule type" value="mRNA"/>
</dbReference>
<dbReference type="EMBL" id="AF400063">
    <property type="protein sequence ID" value="AAK84420.1"/>
    <property type="molecule type" value="mRNA"/>
</dbReference>
<dbReference type="EMBL" id="Y15160">
    <property type="protein sequence ID" value="CAB65238.1"/>
    <property type="molecule type" value="mRNA"/>
</dbReference>
<dbReference type="EMBL" id="AJ271919">
    <property type="protein sequence ID" value="CAC88133.1"/>
    <property type="molecule type" value="Genomic_DNA"/>
</dbReference>
<dbReference type="EMBL" id="AJ271920">
    <property type="protein sequence ID" value="CAC88133.1"/>
    <property type="status" value="JOINED"/>
    <property type="molecule type" value="Genomic_DNA"/>
</dbReference>
<dbReference type="EMBL" id="AJ271921">
    <property type="protein sequence ID" value="CAC88133.1"/>
    <property type="status" value="JOINED"/>
    <property type="molecule type" value="Genomic_DNA"/>
</dbReference>
<dbReference type="EMBL" id="AJ271922">
    <property type="protein sequence ID" value="CAC88133.1"/>
    <property type="status" value="JOINED"/>
    <property type="molecule type" value="Genomic_DNA"/>
</dbReference>
<dbReference type="EMBL" id="AJ271923">
    <property type="protein sequence ID" value="CAC88133.1"/>
    <property type="status" value="JOINED"/>
    <property type="molecule type" value="Genomic_DNA"/>
</dbReference>
<dbReference type="EMBL" id="AK010787">
    <property type="protein sequence ID" value="BAB27183.1"/>
    <property type="molecule type" value="mRNA"/>
</dbReference>
<dbReference type="EMBL" id="BC058386">
    <property type="protein sequence ID" value="AAH58386.1"/>
    <property type="molecule type" value="mRNA"/>
</dbReference>
<dbReference type="CCDS" id="CCDS29890.1">
    <molecule id="Q923S6-1"/>
</dbReference>
<dbReference type="CCDS" id="CCDS50463.1">
    <molecule id="Q923S6-2"/>
</dbReference>
<dbReference type="RefSeq" id="NP_001156952.1">
    <molecule id="Q923S6-2"/>
    <property type="nucleotide sequence ID" value="NM_001163480.1"/>
</dbReference>
<dbReference type="RefSeq" id="NP_067335.4">
    <molecule id="Q923S6-1"/>
    <property type="nucleotide sequence ID" value="NM_021360.4"/>
</dbReference>
<dbReference type="SMR" id="Q923S6"/>
<dbReference type="BioGRID" id="201732">
    <property type="interactions" value="4"/>
</dbReference>
<dbReference type="FunCoup" id="Q923S6">
    <property type="interactions" value="675"/>
</dbReference>
<dbReference type="IntAct" id="Q923S6">
    <property type="interactions" value="7"/>
</dbReference>
<dbReference type="STRING" id="10090.ENSMUSP00000107439"/>
<dbReference type="GlyGen" id="Q923S6">
    <property type="glycosylation" value="1 site"/>
</dbReference>
<dbReference type="iPTMnet" id="Q923S6"/>
<dbReference type="PhosphoSitePlus" id="Q923S6"/>
<dbReference type="jPOST" id="Q923S6"/>
<dbReference type="PaxDb" id="10090-ENSMUSP00000107439"/>
<dbReference type="ProteomicsDB" id="252949">
    <molecule id="Q923S6-1"/>
</dbReference>
<dbReference type="ProteomicsDB" id="252950">
    <molecule id="Q923S6-2"/>
</dbReference>
<dbReference type="ProteomicsDB" id="252951">
    <molecule id="Q923S6-3"/>
</dbReference>
<dbReference type="Antibodypedia" id="46062">
    <property type="antibodies" value="215 antibodies from 29 providers"/>
</dbReference>
<dbReference type="DNASU" id="18011"/>
<dbReference type="Ensembl" id="ENSMUST00000111807.5">
    <molecule id="Q923S6-2"/>
    <property type="protein sequence ID" value="ENSMUSP00000107438.4"/>
    <property type="gene ID" value="ENSMUSG00000006435.17"/>
</dbReference>
<dbReference type="Ensembl" id="ENSMUST00000111808.11">
    <molecule id="Q923S6-1"/>
    <property type="protein sequence ID" value="ENSMUSP00000107439.4"/>
    <property type="gene ID" value="ENSMUSG00000006435.17"/>
</dbReference>
<dbReference type="Ensembl" id="ENSMUST00000235290.2">
    <molecule id="Q923S6-3"/>
    <property type="protein sequence ID" value="ENSMUSP00000158072.2"/>
    <property type="gene ID" value="ENSMUSG00000006435.17"/>
</dbReference>
<dbReference type="GeneID" id="18011"/>
<dbReference type="KEGG" id="mmu:18011"/>
<dbReference type="UCSC" id="uc008hut.1">
    <molecule id="Q923S6-3"/>
    <property type="organism name" value="mouse"/>
</dbReference>
<dbReference type="UCSC" id="uc008huu.1">
    <molecule id="Q923S6-1"/>
    <property type="organism name" value="mouse"/>
</dbReference>
<dbReference type="UCSC" id="uc008huv.2">
    <molecule id="Q923S6-2"/>
    <property type="organism name" value="mouse"/>
</dbReference>
<dbReference type="AGR" id="MGI:1334263"/>
<dbReference type="CTD" id="18011"/>
<dbReference type="MGI" id="MGI:1334263">
    <property type="gene designation" value="Neurl1a"/>
</dbReference>
<dbReference type="VEuPathDB" id="HostDB:ENSMUSG00000006435"/>
<dbReference type="eggNOG" id="KOG4172">
    <property type="taxonomic scope" value="Eukaryota"/>
</dbReference>
<dbReference type="eggNOG" id="KOG4625">
    <property type="taxonomic scope" value="Eukaryota"/>
</dbReference>
<dbReference type="GeneTree" id="ENSGT00940000156696"/>
<dbReference type="HOGENOM" id="CLU_013230_1_0_1"/>
<dbReference type="InParanoid" id="Q923S6"/>
<dbReference type="OMA" id="HTVRGKH"/>
<dbReference type="OrthoDB" id="6078042at2759"/>
<dbReference type="PhylomeDB" id="Q923S6"/>
<dbReference type="TreeFam" id="TF314368"/>
<dbReference type="UniPathway" id="UPA00143"/>
<dbReference type="BioGRID-ORCS" id="18011">
    <property type="hits" value="4 hits in 77 CRISPR screens"/>
</dbReference>
<dbReference type="ChiTaRS" id="Neurl1a">
    <property type="organism name" value="mouse"/>
</dbReference>
<dbReference type="PRO" id="PR:Q923S6"/>
<dbReference type="Proteomes" id="UP000000589">
    <property type="component" value="Chromosome 19"/>
</dbReference>
<dbReference type="RNAct" id="Q923S6">
    <property type="molecule type" value="protein"/>
</dbReference>
<dbReference type="Bgee" id="ENSMUSG00000006435">
    <property type="expression patterns" value="Expressed in hindlimb stylopod muscle and 169 other cell types or tissues"/>
</dbReference>
<dbReference type="ExpressionAtlas" id="Q923S6">
    <property type="expression patterns" value="baseline and differential"/>
</dbReference>
<dbReference type="GO" id="GO:0097440">
    <property type="term" value="C:apical dendrite"/>
    <property type="evidence" value="ECO:0000314"/>
    <property type="project" value="UniProtKB"/>
</dbReference>
<dbReference type="GO" id="GO:0005737">
    <property type="term" value="C:cytoplasm"/>
    <property type="evidence" value="ECO:0000314"/>
    <property type="project" value="MGI"/>
</dbReference>
<dbReference type="GO" id="GO:0043197">
    <property type="term" value="C:dendritic spine"/>
    <property type="evidence" value="ECO:0000314"/>
    <property type="project" value="UniProtKB"/>
</dbReference>
<dbReference type="GO" id="GO:0098978">
    <property type="term" value="C:glutamatergic synapse"/>
    <property type="evidence" value="ECO:0000314"/>
    <property type="project" value="SynGO"/>
</dbReference>
<dbReference type="GO" id="GO:0043204">
    <property type="term" value="C:perikaryon"/>
    <property type="evidence" value="ECO:0000314"/>
    <property type="project" value="UniProtKB"/>
</dbReference>
<dbReference type="GO" id="GO:0048471">
    <property type="term" value="C:perinuclear region of cytoplasm"/>
    <property type="evidence" value="ECO:0007669"/>
    <property type="project" value="UniProtKB-SubCell"/>
</dbReference>
<dbReference type="GO" id="GO:0005886">
    <property type="term" value="C:plasma membrane"/>
    <property type="evidence" value="ECO:0000314"/>
    <property type="project" value="MGI"/>
</dbReference>
<dbReference type="GO" id="GO:0014069">
    <property type="term" value="C:postsynaptic density"/>
    <property type="evidence" value="ECO:0000314"/>
    <property type="project" value="UniProtKB"/>
</dbReference>
<dbReference type="GO" id="GO:0045182">
    <property type="term" value="F:translation regulator activity"/>
    <property type="evidence" value="ECO:0000314"/>
    <property type="project" value="UniProtKB"/>
</dbReference>
<dbReference type="GO" id="GO:0061630">
    <property type="term" value="F:ubiquitin protein ligase activity"/>
    <property type="evidence" value="ECO:0000314"/>
    <property type="project" value="MGI"/>
</dbReference>
<dbReference type="GO" id="GO:0004842">
    <property type="term" value="F:ubiquitin-protein transferase activity"/>
    <property type="evidence" value="ECO:0000314"/>
    <property type="project" value="UniProtKB"/>
</dbReference>
<dbReference type="GO" id="GO:0008270">
    <property type="term" value="F:zinc ion binding"/>
    <property type="evidence" value="ECO:0007669"/>
    <property type="project" value="UniProtKB-KW"/>
</dbReference>
<dbReference type="GO" id="GO:0071230">
    <property type="term" value="P:cellular response to amino acid stimulus"/>
    <property type="evidence" value="ECO:0000314"/>
    <property type="project" value="UniProtKB"/>
</dbReference>
<dbReference type="GO" id="GO:0030317">
    <property type="term" value="P:flagellated sperm motility"/>
    <property type="evidence" value="ECO:0000315"/>
    <property type="project" value="MGI"/>
</dbReference>
<dbReference type="GO" id="GO:0007595">
    <property type="term" value="P:lactation"/>
    <property type="evidence" value="ECO:0000315"/>
    <property type="project" value="MGI"/>
</dbReference>
<dbReference type="GO" id="GO:0008285">
    <property type="term" value="P:negative regulation of cell population proliferation"/>
    <property type="evidence" value="ECO:0000250"/>
    <property type="project" value="UniProtKB"/>
</dbReference>
<dbReference type="GO" id="GO:0045746">
    <property type="term" value="P:negative regulation of Notch signaling pathway"/>
    <property type="evidence" value="ECO:0000250"/>
    <property type="project" value="UniProtKB"/>
</dbReference>
<dbReference type="GO" id="GO:0007219">
    <property type="term" value="P:Notch signaling pathway"/>
    <property type="evidence" value="ECO:0007669"/>
    <property type="project" value="UniProtKB-KW"/>
</dbReference>
<dbReference type="GO" id="GO:0043065">
    <property type="term" value="P:positive regulation of apoptotic process"/>
    <property type="evidence" value="ECO:0000250"/>
    <property type="project" value="UniProtKB"/>
</dbReference>
<dbReference type="GO" id="GO:0060999">
    <property type="term" value="P:positive regulation of dendritic spine development"/>
    <property type="evidence" value="ECO:0000314"/>
    <property type="project" value="UniProtKB"/>
</dbReference>
<dbReference type="GO" id="GO:0051491">
    <property type="term" value="P:positive regulation of filopodium assembly"/>
    <property type="evidence" value="ECO:0000314"/>
    <property type="project" value="UniProtKB"/>
</dbReference>
<dbReference type="GO" id="GO:0048170">
    <property type="term" value="P:positive regulation of long-term neuronal synaptic plasticity"/>
    <property type="evidence" value="ECO:0000314"/>
    <property type="project" value="UniProtKB"/>
</dbReference>
<dbReference type="GO" id="GO:0090129">
    <property type="term" value="P:positive regulation of synapse maturation"/>
    <property type="evidence" value="ECO:0000314"/>
    <property type="project" value="UniProtKB"/>
</dbReference>
<dbReference type="GO" id="GO:0006513">
    <property type="term" value="P:protein monoubiquitination"/>
    <property type="evidence" value="ECO:0000314"/>
    <property type="project" value="UniProtKB"/>
</dbReference>
<dbReference type="GO" id="GO:0150052">
    <property type="term" value="P:regulation of postsynapse assembly"/>
    <property type="evidence" value="ECO:0000314"/>
    <property type="project" value="SynGO"/>
</dbReference>
<dbReference type="GO" id="GO:0007519">
    <property type="term" value="P:skeletal muscle tissue development"/>
    <property type="evidence" value="ECO:0007669"/>
    <property type="project" value="Ensembl"/>
</dbReference>
<dbReference type="GO" id="GO:0007288">
    <property type="term" value="P:sperm axoneme assembly"/>
    <property type="evidence" value="ECO:0000315"/>
    <property type="project" value="MGI"/>
</dbReference>
<dbReference type="CDD" id="cd16785">
    <property type="entry name" value="mRING-HC-C3HC5_NEU1A"/>
    <property type="match status" value="1"/>
</dbReference>
<dbReference type="FunFam" id="2.60.120.920:FF:000022">
    <property type="entry name" value="E3 ubiquitin-protein ligase NEURL1 isoform X2"/>
    <property type="match status" value="1"/>
</dbReference>
<dbReference type="FunFam" id="2.60.120.920:FF:000005">
    <property type="entry name" value="Putative E3 ubiquitin-protein ligase NEURL1B"/>
    <property type="match status" value="1"/>
</dbReference>
<dbReference type="FunFam" id="3.30.40.10:FF:000056">
    <property type="entry name" value="Putative E3 ubiquitin-protein ligase NEURL1B"/>
    <property type="match status" value="1"/>
</dbReference>
<dbReference type="Gene3D" id="2.60.120.920">
    <property type="match status" value="2"/>
</dbReference>
<dbReference type="Gene3D" id="3.30.40.10">
    <property type="entry name" value="Zinc/RING finger domain, C3HC4 (zinc finger)"/>
    <property type="match status" value="1"/>
</dbReference>
<dbReference type="InterPro" id="IPR043136">
    <property type="entry name" value="B30.2/SPRY_sf"/>
</dbReference>
<dbReference type="InterPro" id="IPR037962">
    <property type="entry name" value="Neuralized"/>
</dbReference>
<dbReference type="InterPro" id="IPR006573">
    <property type="entry name" value="NHR_dom"/>
</dbReference>
<dbReference type="InterPro" id="IPR001841">
    <property type="entry name" value="Znf_RING"/>
</dbReference>
<dbReference type="InterPro" id="IPR013083">
    <property type="entry name" value="Znf_RING/FYVE/PHD"/>
</dbReference>
<dbReference type="PANTHER" id="PTHR12429:SF13">
    <property type="entry name" value="E3 UBIQUITIN-PROTEIN LIGASE NEURL1"/>
    <property type="match status" value="1"/>
</dbReference>
<dbReference type="PANTHER" id="PTHR12429">
    <property type="entry name" value="NEURALIZED"/>
    <property type="match status" value="1"/>
</dbReference>
<dbReference type="Pfam" id="PF07177">
    <property type="entry name" value="Neuralized"/>
    <property type="match status" value="2"/>
</dbReference>
<dbReference type="Pfam" id="PF13920">
    <property type="entry name" value="zf-C3HC4_3"/>
    <property type="match status" value="1"/>
</dbReference>
<dbReference type="SMART" id="SM00588">
    <property type="entry name" value="NEUZ"/>
    <property type="match status" value="2"/>
</dbReference>
<dbReference type="SUPFAM" id="SSF57850">
    <property type="entry name" value="RING/U-box"/>
    <property type="match status" value="1"/>
</dbReference>
<dbReference type="PROSITE" id="PS51065">
    <property type="entry name" value="NHR"/>
    <property type="match status" value="2"/>
</dbReference>
<dbReference type="PROSITE" id="PS50089">
    <property type="entry name" value="ZF_RING_2"/>
    <property type="match status" value="1"/>
</dbReference>
<proteinExistence type="evidence at protein level"/>
<comment type="function">
    <text evidence="7 9">Plays a role in hippocampal-dependent synaptic plasticity, learning and memory. Involved in the formation of spines and functional synaptic contacts by modulating the translational activity of the cytoplasmic polyadenylation element-binding protein CPEB3. Promotes ubiquitination of CPEB3, and hence induces CPEB3-dependent mRNA translation activation of glutamate receptor GRIA1 and GRIA2. Can function as an E3 ubiquitin-protein ligase to activate monoubiquitination of JAG1 (in vitro), thereby regulating the Notch pathway. Acts as a tumor suppressor; inhibits malignant cell transformation of medulloblastoma (MB) cells by inhibiting the Notch signaling pathway.</text>
</comment>
<comment type="catalytic activity">
    <reaction>
        <text>S-ubiquitinyl-[E2 ubiquitin-conjugating enzyme]-L-cysteine + [acceptor protein]-L-lysine = [E2 ubiquitin-conjugating enzyme]-L-cysteine + N(6)-ubiquitinyl-[acceptor protein]-L-lysine.</text>
        <dbReference type="EC" id="2.3.2.27"/>
    </reaction>
</comment>
<comment type="pathway">
    <text>Protein modification; protein ubiquitination.</text>
</comment>
<comment type="subunit">
    <text evidence="8 9">Interacts with CPEB3 (via N-terminal domain); the interaction increases CPEB3 ubiquitination. Interacts with DLL1 (PubMed:19723503).</text>
</comment>
<comment type="interaction">
    <interactant intactId="EBI-5376802">
        <id>Q923S6</id>
    </interactant>
    <interactant intactId="EBI-5376779">
        <id>Q7TN99</id>
        <label>Cpeb3</label>
    </interactant>
    <organismsDiffer>false</organismsDiffer>
    <experiments>9</experiments>
</comment>
<comment type="subcellular location">
    <subcellularLocation>
        <location evidence="1">Cytoplasm</location>
        <location evidence="1">Perinuclear region</location>
    </subcellularLocation>
    <subcellularLocation>
        <location evidence="9">Cell membrane</location>
        <topology evidence="9">Peripheral membrane protein</topology>
    </subcellularLocation>
    <subcellularLocation>
        <location evidence="9">Perikaryon</location>
    </subcellularLocation>
    <subcellularLocation>
        <location evidence="9">Cell projection</location>
        <location evidence="9">Dendrite</location>
    </subcellularLocation>
    <subcellularLocation>
        <location evidence="9">Postsynaptic density</location>
    </subcellularLocation>
    <text evidence="1">Colocalized with JAG1 at the cell surface (By similarity). Localized in the cell bodies of the pyramidal neurons and distributed along their apical dendrites. Colocalized with PSD95 in postsynaptic sites. Colocalized with CPEB3 at apical dendrites of CA1 neurons.</text>
</comment>
<comment type="alternative products">
    <event type="alternative splicing"/>
    <isoform>
        <id>Q923S6-1</id>
        <name>1</name>
        <sequence type="displayed"/>
    </isoform>
    <isoform>
        <id>Q923S6-2</id>
        <name>2</name>
        <sequence type="described" ref="VSP_013152"/>
    </isoform>
    <isoform>
        <id>Q923S6-3</id>
        <name>3</name>
        <sequence type="described" ref="VSP_013153 VSP_013154"/>
    </isoform>
</comment>
<comment type="tissue specificity">
    <text evidence="5 6 9">Expressed in CA1 pyramidal neurons (at protein level). Expressed throughout the adult forebrain, including the cerebral cortex, amygdala, striatum, and CA1 area of the hippocampus. Expressed in sensory neurons of the olfactory epithelium, the vomeronasal organ, mammary gland and skeletal muscle.</text>
</comment>
<comment type="developmental stage">
    <text evidence="5 6">Expressed in the somites at 8.5 dpc onwards.</text>
</comment>
<comment type="induction">
    <text evidence="9">Up-regulated by synaptic activity.</text>
</comment>
<comment type="PTM">
    <text evidence="7">Myristoylation is a determinant of membrane targeting.</text>
</comment>
<comment type="disruption phenotype">
    <text evidence="5 6">According to PubMed:11585928, knockout male mice lacking Neurl1 are sterile due to a defect in axoneme organization in the spermatozoa that leads to compromised tail movement and sperm motility; knockout female mice lacking Neurl1 are defective in the final stages of mammary gland maturation during pregnancy. According to PubMed:11481456 knockout mice lacking Neurl1 are viable and morphologically normal but display an olfactory discrimination and are more sensitive to the effect of ethanol on motor coordination.</text>
</comment>